<comment type="function">
    <text evidence="1">NDH-1 shuttles electrons from NADH, via FMN and iron-sulfur (Fe-S) centers, to quinones in the respiratory chain. The immediate electron acceptor for the enzyme in this species is believed to be a menaquinone. Couples the redox reaction to proton translocation (for every two electrons transferred, four hydrogen ions are translocated across the cytoplasmic membrane), and thus conserves the redox energy in a proton gradient.</text>
</comment>
<comment type="catalytic activity">
    <reaction evidence="1">
        <text>a quinone + NADH + 5 H(+)(in) = a quinol + NAD(+) + 4 H(+)(out)</text>
        <dbReference type="Rhea" id="RHEA:57888"/>
        <dbReference type="ChEBI" id="CHEBI:15378"/>
        <dbReference type="ChEBI" id="CHEBI:24646"/>
        <dbReference type="ChEBI" id="CHEBI:57540"/>
        <dbReference type="ChEBI" id="CHEBI:57945"/>
        <dbReference type="ChEBI" id="CHEBI:132124"/>
    </reaction>
</comment>
<comment type="subunit">
    <text evidence="1">NDH-1 is composed of 14 different subunits. Subunits NuoA, H, J, K, L, M, N constitute the membrane sector of the complex.</text>
</comment>
<comment type="subcellular location">
    <subcellularLocation>
        <location evidence="1">Cell membrane</location>
        <topology evidence="1">Multi-pass membrane protein</topology>
    </subcellularLocation>
</comment>
<comment type="similarity">
    <text evidence="1">Belongs to the complex I subunit 2 family.</text>
</comment>
<gene>
    <name evidence="1" type="primary">nuoN</name>
    <name type="ordered locus">Strop_0405</name>
</gene>
<proteinExistence type="inferred from homology"/>
<protein>
    <recommendedName>
        <fullName evidence="1">NADH-quinone oxidoreductase subunit N</fullName>
        <ecNumber evidence="1">7.1.1.-</ecNumber>
    </recommendedName>
    <alternativeName>
        <fullName evidence="1">NADH dehydrogenase I subunit N</fullName>
    </alternativeName>
    <alternativeName>
        <fullName evidence="1">NDH-1 subunit N</fullName>
    </alternativeName>
</protein>
<sequence length="516" mass="51388">MSMVQTVDNVALLPAYLAAGTAVLVLLADLLVARARVTISVAALGALATAAGAVLVGGGGERRTFCVGADCSYVFGGRAALVAVLVALLTLGVLGLSGPLLRAGATPVGEYCFLLAASMTGGVALGAAGDLITLIVALETLTLPLYVLVGLRRGSLASIEAAVTFFVVSVVATTLTLLGAALLYATTGALHLGRLGALFAERPELLDIPLTTVAVALVVVGLTVKVAAVPFHAWAPTTYDGAPLPVAAYLSTVSKLGGVVALLAVVQHALPAQITGLVLALLAVLTMTVGNLVALRQRRTVRLLAWSSVAQAGYILAPLGALALAAGRTGDARAAAYAAAVAYTVFFVVLELAAFAAVVALRPAGADGGTLDELRGAARRRPWAAVGLALALVGLAGLPPGLAGLFAKVTVVRSLLDGGAAGLALVVAVNAVLGLAYYLRVVAALWSTDRPAVIPTDPTAVPTDPAAAATGPAVGSIDPSVALVRAKPVAVVLAAATVVALVVGFAPQLVLDLAAR</sequence>
<feature type="chain" id="PRO_0000391222" description="NADH-quinone oxidoreductase subunit N">
    <location>
        <begin position="1"/>
        <end position="516"/>
    </location>
</feature>
<feature type="transmembrane region" description="Helical" evidence="1">
    <location>
        <begin position="12"/>
        <end position="32"/>
    </location>
</feature>
<feature type="transmembrane region" description="Helical" evidence="1">
    <location>
        <begin position="37"/>
        <end position="57"/>
    </location>
</feature>
<feature type="transmembrane region" description="Helical" evidence="1">
    <location>
        <begin position="81"/>
        <end position="101"/>
    </location>
</feature>
<feature type="transmembrane region" description="Helical" evidence="1">
    <location>
        <begin position="108"/>
        <end position="128"/>
    </location>
</feature>
<feature type="transmembrane region" description="Helical" evidence="1">
    <location>
        <begin position="131"/>
        <end position="151"/>
    </location>
</feature>
<feature type="transmembrane region" description="Helical" evidence="1">
    <location>
        <begin position="163"/>
        <end position="183"/>
    </location>
</feature>
<feature type="transmembrane region" description="Helical" evidence="1">
    <location>
        <begin position="213"/>
        <end position="233"/>
    </location>
</feature>
<feature type="transmembrane region" description="Helical" evidence="1">
    <location>
        <begin position="246"/>
        <end position="266"/>
    </location>
</feature>
<feature type="transmembrane region" description="Helical" evidence="1">
    <location>
        <begin position="274"/>
        <end position="294"/>
    </location>
</feature>
<feature type="transmembrane region" description="Helical" evidence="1">
    <location>
        <begin position="303"/>
        <end position="323"/>
    </location>
</feature>
<feature type="transmembrane region" description="Helical" evidence="1">
    <location>
        <begin position="341"/>
        <end position="361"/>
    </location>
</feature>
<feature type="transmembrane region" description="Helical" evidence="1">
    <location>
        <begin position="386"/>
        <end position="406"/>
    </location>
</feature>
<feature type="transmembrane region" description="Helical" evidence="1">
    <location>
        <begin position="419"/>
        <end position="439"/>
    </location>
</feature>
<feature type="transmembrane region" description="Helical" evidence="1">
    <location>
        <begin position="491"/>
        <end position="511"/>
    </location>
</feature>
<dbReference type="EC" id="7.1.1.-" evidence="1"/>
<dbReference type="EMBL" id="CP000667">
    <property type="protein sequence ID" value="ABP52890.1"/>
    <property type="molecule type" value="Genomic_DNA"/>
</dbReference>
<dbReference type="RefSeq" id="WP_011904324.1">
    <property type="nucleotide sequence ID" value="NC_009380.1"/>
</dbReference>
<dbReference type="SMR" id="A4X1Z0"/>
<dbReference type="STRING" id="369723.Strop_0405"/>
<dbReference type="KEGG" id="stp:Strop_0405"/>
<dbReference type="PATRIC" id="fig|369723.5.peg.419"/>
<dbReference type="eggNOG" id="COG1007">
    <property type="taxonomic scope" value="Bacteria"/>
</dbReference>
<dbReference type="HOGENOM" id="CLU_007100_1_1_11"/>
<dbReference type="Proteomes" id="UP000000235">
    <property type="component" value="Chromosome"/>
</dbReference>
<dbReference type="GO" id="GO:0005886">
    <property type="term" value="C:plasma membrane"/>
    <property type="evidence" value="ECO:0007669"/>
    <property type="project" value="UniProtKB-SubCell"/>
</dbReference>
<dbReference type="GO" id="GO:0008137">
    <property type="term" value="F:NADH dehydrogenase (ubiquinone) activity"/>
    <property type="evidence" value="ECO:0007669"/>
    <property type="project" value="InterPro"/>
</dbReference>
<dbReference type="GO" id="GO:0050136">
    <property type="term" value="F:NADH:ubiquinone reductase (non-electrogenic) activity"/>
    <property type="evidence" value="ECO:0007669"/>
    <property type="project" value="UniProtKB-UniRule"/>
</dbReference>
<dbReference type="GO" id="GO:0048038">
    <property type="term" value="F:quinone binding"/>
    <property type="evidence" value="ECO:0007669"/>
    <property type="project" value="UniProtKB-KW"/>
</dbReference>
<dbReference type="GO" id="GO:0042773">
    <property type="term" value="P:ATP synthesis coupled electron transport"/>
    <property type="evidence" value="ECO:0007669"/>
    <property type="project" value="InterPro"/>
</dbReference>
<dbReference type="HAMAP" id="MF_00445">
    <property type="entry name" value="NDH1_NuoN_1"/>
    <property type="match status" value="1"/>
</dbReference>
<dbReference type="InterPro" id="IPR010096">
    <property type="entry name" value="NADH-Q_OxRdtase_suN/2"/>
</dbReference>
<dbReference type="InterPro" id="IPR001750">
    <property type="entry name" value="ND/Mrp_TM"/>
</dbReference>
<dbReference type="PANTHER" id="PTHR22773">
    <property type="entry name" value="NADH DEHYDROGENASE"/>
    <property type="match status" value="1"/>
</dbReference>
<dbReference type="Pfam" id="PF00361">
    <property type="entry name" value="Proton_antipo_M"/>
    <property type="match status" value="1"/>
</dbReference>
<evidence type="ECO:0000255" key="1">
    <source>
        <dbReference type="HAMAP-Rule" id="MF_00445"/>
    </source>
</evidence>
<organism>
    <name type="scientific">Salinispora tropica (strain ATCC BAA-916 / DSM 44818 / JCM 13857 / NBRC 105044 / CNB-440)</name>
    <dbReference type="NCBI Taxonomy" id="369723"/>
    <lineage>
        <taxon>Bacteria</taxon>
        <taxon>Bacillati</taxon>
        <taxon>Actinomycetota</taxon>
        <taxon>Actinomycetes</taxon>
        <taxon>Micromonosporales</taxon>
        <taxon>Micromonosporaceae</taxon>
        <taxon>Salinispora</taxon>
    </lineage>
</organism>
<keyword id="KW-1003">Cell membrane</keyword>
<keyword id="KW-0472">Membrane</keyword>
<keyword id="KW-0520">NAD</keyword>
<keyword id="KW-0874">Quinone</keyword>
<keyword id="KW-1185">Reference proteome</keyword>
<keyword id="KW-1278">Translocase</keyword>
<keyword id="KW-0812">Transmembrane</keyword>
<keyword id="KW-1133">Transmembrane helix</keyword>
<keyword id="KW-0813">Transport</keyword>
<accession>A4X1Z0</accession>
<name>NUON_SALTO</name>
<reference key="1">
    <citation type="journal article" date="2007" name="Proc. Natl. Acad. Sci. U.S.A.">
        <title>Genome sequencing reveals complex secondary metabolome in the marine actinomycete Salinispora tropica.</title>
        <authorList>
            <person name="Udwary D.W."/>
            <person name="Zeigler L."/>
            <person name="Asolkar R.N."/>
            <person name="Singan V."/>
            <person name="Lapidus A."/>
            <person name="Fenical W."/>
            <person name="Jensen P.R."/>
            <person name="Moore B.S."/>
        </authorList>
    </citation>
    <scope>NUCLEOTIDE SEQUENCE [LARGE SCALE GENOMIC DNA]</scope>
    <source>
        <strain>ATCC BAA-916 / DSM 44818 / JCM 13857 / NBRC 105044 / CNB-440</strain>
    </source>
</reference>